<proteinExistence type="inferred from homology"/>
<evidence type="ECO:0000255" key="1">
    <source>
        <dbReference type="HAMAP-Rule" id="MF_01527"/>
    </source>
</evidence>
<evidence type="ECO:0000305" key="2"/>
<protein>
    <recommendedName>
        <fullName evidence="1">GTP cyclohydrolase MptA</fullName>
        <ecNumber evidence="1">3.5.4.39</ecNumber>
    </recommendedName>
    <alternativeName>
        <fullName evidence="1">GTP cyclohydrolase IV</fullName>
    </alternativeName>
</protein>
<keyword id="KW-0378">Hydrolase</keyword>
<keyword id="KW-0408">Iron</keyword>
<keyword id="KW-0479">Metal-binding</keyword>
<keyword id="KW-1185">Reference proteome</keyword>
<feature type="chain" id="PRO_0000147742" description="GTP cyclohydrolase MptA">
    <location>
        <begin position="1"/>
        <end position="318"/>
    </location>
</feature>
<feature type="site" description="May be catalytically important" evidence="1">
    <location>
        <position position="167"/>
    </location>
</feature>
<sequence length="318" mass="35767">MEHCTFNLPDVQASKPSIAINLTRVGVTNMKKLVEIKRKDKRPIVLISTFDVFVDLPSDRKGANLSRNFEAVDEVLEKVLSTPVYEIEQLCSDIAHNLLGRHEYANQAEVRMKSEYMIRRASPSTGIKCQEVVNIFAEASAVRGVGDKDYFDVKKLIGAEVVGMTACPCAQEIMRDKAANELAELGVDRDTIIRFLEKVPMATHNQRGRGIISIKVAHDFDVSLESIIRIIERSMSSSVYEVLKRSDEKVVVETAHMNPKFVEDCVRAMADNIVKEFPNLPDNAVITIKQINEESIHRHNAFAERVALMGELRSEINQ</sequence>
<gene>
    <name evidence="1" type="primary">mptA</name>
    <name type="ordered locus">MA_4517</name>
</gene>
<name>MPTA_METAC</name>
<comment type="function">
    <text evidence="1">Converts GTP to 7,8-dihydro-D-neopterin 2',3'-cyclic phosphate, the first intermediate in the biosynthesis of coenzyme methanopterin.</text>
</comment>
<comment type="catalytic activity">
    <reaction evidence="1">
        <text>GTP + H2O = 7,8-dihydroneopterin 2',3'-cyclic phosphate + formate + diphosphate + H(+)</text>
        <dbReference type="Rhea" id="RHEA:25860"/>
        <dbReference type="ChEBI" id="CHEBI:15377"/>
        <dbReference type="ChEBI" id="CHEBI:15378"/>
        <dbReference type="ChEBI" id="CHEBI:15740"/>
        <dbReference type="ChEBI" id="CHEBI:33019"/>
        <dbReference type="ChEBI" id="CHEBI:37565"/>
        <dbReference type="ChEBI" id="CHEBI:58854"/>
        <dbReference type="EC" id="3.5.4.39"/>
    </reaction>
</comment>
<comment type="cofactor">
    <cofactor evidence="1">
        <name>Fe(2+)</name>
        <dbReference type="ChEBI" id="CHEBI:29033"/>
    </cofactor>
    <text evidence="1">Binds 1 Fe(2+) ion per subunit.</text>
</comment>
<comment type="pathway">
    <text evidence="1">Cofactor biosynthesis; 5,6,7,8-tetrahydromethanopterin biosynthesis.</text>
</comment>
<comment type="subunit">
    <text evidence="1">Homodimer.</text>
</comment>
<comment type="similarity">
    <text evidence="1">Belongs to the GTP cyclohydrolase IV family.</text>
</comment>
<comment type="sequence caution" evidence="2">
    <conflict type="erroneous initiation">
        <sequence resource="EMBL-CDS" id="AAM07857"/>
    </conflict>
</comment>
<reference key="1">
    <citation type="journal article" date="2002" name="Genome Res.">
        <title>The genome of Methanosarcina acetivorans reveals extensive metabolic and physiological diversity.</title>
        <authorList>
            <person name="Galagan J.E."/>
            <person name="Nusbaum C."/>
            <person name="Roy A."/>
            <person name="Endrizzi M.G."/>
            <person name="Macdonald P."/>
            <person name="FitzHugh W."/>
            <person name="Calvo S."/>
            <person name="Engels R."/>
            <person name="Smirnov S."/>
            <person name="Atnoor D."/>
            <person name="Brown A."/>
            <person name="Allen N."/>
            <person name="Naylor J."/>
            <person name="Stange-Thomann N."/>
            <person name="DeArellano K."/>
            <person name="Johnson R."/>
            <person name="Linton L."/>
            <person name="McEwan P."/>
            <person name="McKernan K."/>
            <person name="Talamas J."/>
            <person name="Tirrell A."/>
            <person name="Ye W."/>
            <person name="Zimmer A."/>
            <person name="Barber R.D."/>
            <person name="Cann I."/>
            <person name="Graham D.E."/>
            <person name="Grahame D.A."/>
            <person name="Guss A.M."/>
            <person name="Hedderich R."/>
            <person name="Ingram-Smith C."/>
            <person name="Kuettner H.C."/>
            <person name="Krzycki J.A."/>
            <person name="Leigh J.A."/>
            <person name="Li W."/>
            <person name="Liu J."/>
            <person name="Mukhopadhyay B."/>
            <person name="Reeve J.N."/>
            <person name="Smith K."/>
            <person name="Springer T.A."/>
            <person name="Umayam L.A."/>
            <person name="White O."/>
            <person name="White R.H."/>
            <person name="de Macario E.C."/>
            <person name="Ferry J.G."/>
            <person name="Jarrell K.F."/>
            <person name="Jing H."/>
            <person name="Macario A.J.L."/>
            <person name="Paulsen I.T."/>
            <person name="Pritchett M."/>
            <person name="Sowers K.R."/>
            <person name="Swanson R.V."/>
            <person name="Zinder S.H."/>
            <person name="Lander E."/>
            <person name="Metcalf W.W."/>
            <person name="Birren B."/>
        </authorList>
    </citation>
    <scope>NUCLEOTIDE SEQUENCE [LARGE SCALE GENOMIC DNA]</scope>
    <source>
        <strain>ATCC 35395 / DSM 2834 / JCM 12185 / C2A</strain>
    </source>
</reference>
<organism>
    <name type="scientific">Methanosarcina acetivorans (strain ATCC 35395 / DSM 2834 / JCM 12185 / C2A)</name>
    <dbReference type="NCBI Taxonomy" id="188937"/>
    <lineage>
        <taxon>Archaea</taxon>
        <taxon>Methanobacteriati</taxon>
        <taxon>Methanobacteriota</taxon>
        <taxon>Stenosarchaea group</taxon>
        <taxon>Methanomicrobia</taxon>
        <taxon>Methanosarcinales</taxon>
        <taxon>Methanosarcinaceae</taxon>
        <taxon>Methanosarcina</taxon>
    </lineage>
</organism>
<dbReference type="EC" id="3.5.4.39" evidence="1"/>
<dbReference type="EMBL" id="AE010299">
    <property type="protein sequence ID" value="AAM07857.1"/>
    <property type="status" value="ALT_INIT"/>
    <property type="molecule type" value="Genomic_DNA"/>
</dbReference>
<dbReference type="RefSeq" id="WP_048066005.1">
    <property type="nucleotide sequence ID" value="NC_003552.1"/>
</dbReference>
<dbReference type="SMR" id="Q8THJ7"/>
<dbReference type="FunCoup" id="Q8THJ7">
    <property type="interactions" value="1"/>
</dbReference>
<dbReference type="STRING" id="188937.MA_4517"/>
<dbReference type="EnsemblBacteria" id="AAM07857">
    <property type="protein sequence ID" value="AAM07857"/>
    <property type="gene ID" value="MA_4517"/>
</dbReference>
<dbReference type="GeneID" id="1476411"/>
<dbReference type="KEGG" id="mac:MA_4517"/>
<dbReference type="HOGENOM" id="CLU_062816_1_0_2"/>
<dbReference type="InParanoid" id="Q8THJ7"/>
<dbReference type="OrthoDB" id="53087at2157"/>
<dbReference type="PhylomeDB" id="Q8THJ7"/>
<dbReference type="UniPathway" id="UPA00065"/>
<dbReference type="Proteomes" id="UP000002487">
    <property type="component" value="Chromosome"/>
</dbReference>
<dbReference type="GO" id="GO:0003933">
    <property type="term" value="F:GTP cyclohydrolase activity"/>
    <property type="evidence" value="ECO:0000318"/>
    <property type="project" value="GO_Central"/>
</dbReference>
<dbReference type="GO" id="GO:0003934">
    <property type="term" value="F:GTP cyclohydrolase I activity"/>
    <property type="evidence" value="ECO:0007669"/>
    <property type="project" value="InterPro"/>
</dbReference>
<dbReference type="GO" id="GO:0044682">
    <property type="term" value="F:GTP cyclohydrolase IV activity"/>
    <property type="evidence" value="ECO:0007669"/>
    <property type="project" value="UniProtKB-UniRule"/>
</dbReference>
<dbReference type="GO" id="GO:0005506">
    <property type="term" value="F:iron ion binding"/>
    <property type="evidence" value="ECO:0007669"/>
    <property type="project" value="UniProtKB-UniRule"/>
</dbReference>
<dbReference type="GO" id="GO:2001118">
    <property type="term" value="P:tetrahydromethanopterin biosynthetic process"/>
    <property type="evidence" value="ECO:0007669"/>
    <property type="project" value="UniProtKB-UniRule"/>
</dbReference>
<dbReference type="Gene3D" id="3.10.270.10">
    <property type="entry name" value="Urate Oxidase"/>
    <property type="match status" value="1"/>
</dbReference>
<dbReference type="HAMAP" id="MF_01527_A">
    <property type="entry name" value="GTP_cyclohydrol_A"/>
    <property type="match status" value="1"/>
</dbReference>
<dbReference type="InterPro" id="IPR003801">
    <property type="entry name" value="GTP_cyclohydrolase_FolE2/MptA"/>
</dbReference>
<dbReference type="InterPro" id="IPR022840">
    <property type="entry name" value="GTP_cyclohydrolase_MptA"/>
</dbReference>
<dbReference type="NCBIfam" id="TIGR00294">
    <property type="entry name" value="GTP cyclohydrolase MptA"/>
    <property type="match status" value="1"/>
</dbReference>
<dbReference type="PANTHER" id="PTHR36445">
    <property type="entry name" value="GTP CYCLOHYDROLASE MPTA"/>
    <property type="match status" value="1"/>
</dbReference>
<dbReference type="PANTHER" id="PTHR36445:SF1">
    <property type="entry name" value="GTP CYCLOHYDROLASE MPTA"/>
    <property type="match status" value="1"/>
</dbReference>
<dbReference type="Pfam" id="PF02649">
    <property type="entry name" value="GCHY-1"/>
    <property type="match status" value="1"/>
</dbReference>
<accession>Q8THJ7</accession>